<dbReference type="EMBL" id="AK142316">
    <property type="protein sequence ID" value="BAE25025.1"/>
    <property type="status" value="ALT_FRAME"/>
    <property type="molecule type" value="mRNA"/>
</dbReference>
<dbReference type="EMBL" id="AL691472">
    <property type="status" value="NOT_ANNOTATED_CDS"/>
    <property type="molecule type" value="Genomic_DNA"/>
</dbReference>
<dbReference type="EMBL" id="CH466519">
    <property type="protein sequence ID" value="EDL27616.1"/>
    <property type="molecule type" value="Genomic_DNA"/>
</dbReference>
<dbReference type="EMBL" id="BC048398">
    <property type="protein sequence ID" value="AAH48398.1"/>
    <property type="molecule type" value="mRNA"/>
</dbReference>
<dbReference type="EMBL" id="BC098206">
    <property type="protein sequence ID" value="AAH98206.1"/>
    <property type="molecule type" value="mRNA"/>
</dbReference>
<dbReference type="CCDS" id="CCDS16452.1"/>
<dbReference type="RefSeq" id="NP_001020417.1">
    <property type="nucleotide sequence ID" value="NM_001025246.3"/>
</dbReference>
<dbReference type="RefSeq" id="NP_001343466.1">
    <property type="nucleotide sequence ID" value="NM_001356537.2"/>
</dbReference>
<dbReference type="RefSeq" id="XP_006499744.1">
    <property type="nucleotide sequence ID" value="XM_006499681.3"/>
</dbReference>
<dbReference type="RefSeq" id="XP_006499747.1">
    <property type="nucleotide sequence ID" value="XM_006499684.2"/>
</dbReference>
<dbReference type="RefSeq" id="XP_006499748.1">
    <property type="nucleotide sequence ID" value="XM_006499685.4"/>
</dbReference>
<dbReference type="RefSeq" id="XP_030107558.1">
    <property type="nucleotide sequence ID" value="XM_030251698.2"/>
</dbReference>
<dbReference type="RefSeq" id="XP_030107559.1">
    <property type="nucleotide sequence ID" value="XM_030251699.2"/>
</dbReference>
<dbReference type="RefSeq" id="XP_030107560.1">
    <property type="nucleotide sequence ID" value="XM_030251700.2"/>
</dbReference>
<dbReference type="RefSeq" id="XP_036018171.1">
    <property type="nucleotide sequence ID" value="XM_036162278.1"/>
</dbReference>
<dbReference type="RefSeq" id="XP_036018172.1">
    <property type="nucleotide sequence ID" value="XM_036162279.1"/>
</dbReference>
<dbReference type="RefSeq" id="XP_036018173.1">
    <property type="nucleotide sequence ID" value="XM_036162280.1"/>
</dbReference>
<dbReference type="RefSeq" id="XP_036018174.1">
    <property type="nucleotide sequence ID" value="XM_036162281.1"/>
</dbReference>
<dbReference type="BioGRID" id="234937">
    <property type="interactions" value="1"/>
</dbReference>
<dbReference type="FunCoup" id="Q4QQM4">
    <property type="interactions" value="11"/>
</dbReference>
<dbReference type="STRING" id="10090.ENSMUSP00000106897"/>
<dbReference type="iPTMnet" id="Q4QQM4"/>
<dbReference type="PhosphoSitePlus" id="Q4QQM4"/>
<dbReference type="SwissPalm" id="Q4QQM4"/>
<dbReference type="jPOST" id="Q4QQM4"/>
<dbReference type="PaxDb" id="10090-ENSMUSP00000106897"/>
<dbReference type="ProteomicsDB" id="294145"/>
<dbReference type="Antibodypedia" id="26149">
    <property type="antibodies" value="174 antibodies from 27 providers"/>
</dbReference>
<dbReference type="Ensembl" id="ENSMUST00000090554.11">
    <property type="protein sequence ID" value="ENSMUSP00000088042.5"/>
    <property type="gene ID" value="ENSMUSG00000068735.15"/>
</dbReference>
<dbReference type="Ensembl" id="ENSMUST00000111266.8">
    <property type="protein sequence ID" value="ENSMUSP00000106897.2"/>
    <property type="gene ID" value="ENSMUSG00000068735.15"/>
</dbReference>
<dbReference type="GeneID" id="277414"/>
<dbReference type="KEGG" id="mmu:277414"/>
<dbReference type="UCSC" id="uc008lfq.1">
    <property type="organism name" value="mouse"/>
</dbReference>
<dbReference type="AGR" id="MGI:2670995"/>
<dbReference type="CTD" id="277414"/>
<dbReference type="MGI" id="MGI:2670995">
    <property type="gene designation" value="Trp53i11"/>
</dbReference>
<dbReference type="VEuPathDB" id="HostDB:ENSMUSG00000068735"/>
<dbReference type="eggNOG" id="ENOG502QQ2K">
    <property type="taxonomic scope" value="Eukaryota"/>
</dbReference>
<dbReference type="GeneTree" id="ENSGT00390000017249"/>
<dbReference type="HOGENOM" id="CLU_099575_1_0_1"/>
<dbReference type="InParanoid" id="Q4QQM4"/>
<dbReference type="OMA" id="CYCAMAS"/>
<dbReference type="OrthoDB" id="6243248at2759"/>
<dbReference type="PhylomeDB" id="Q4QQM4"/>
<dbReference type="TreeFam" id="TF321310"/>
<dbReference type="BioGRID-ORCS" id="277414">
    <property type="hits" value="4 hits in 79 CRISPR screens"/>
</dbReference>
<dbReference type="CD-CODE" id="CE726F99">
    <property type="entry name" value="Postsynaptic density"/>
</dbReference>
<dbReference type="ChiTaRS" id="Trp53i11">
    <property type="organism name" value="mouse"/>
</dbReference>
<dbReference type="PRO" id="PR:Q4QQM4"/>
<dbReference type="Proteomes" id="UP000000589">
    <property type="component" value="Chromosome 2"/>
</dbReference>
<dbReference type="RNAct" id="Q4QQM4">
    <property type="molecule type" value="protein"/>
</dbReference>
<dbReference type="Bgee" id="ENSMUSG00000068735">
    <property type="expression patterns" value="Expressed in cortical plate and 201 other cell types or tissues"/>
</dbReference>
<dbReference type="ExpressionAtlas" id="Q4QQM4">
    <property type="expression patterns" value="baseline and differential"/>
</dbReference>
<dbReference type="GO" id="GO:0016020">
    <property type="term" value="C:membrane"/>
    <property type="evidence" value="ECO:0007669"/>
    <property type="project" value="UniProtKB-SubCell"/>
</dbReference>
<dbReference type="InterPro" id="IPR028266">
    <property type="entry name" value="TP53I11"/>
</dbReference>
<dbReference type="PANTHER" id="PTHR31584">
    <property type="entry name" value="TUMOR PROTEIN P53-INDUCIBLE PROTEIN 11"/>
    <property type="match status" value="1"/>
</dbReference>
<dbReference type="PANTHER" id="PTHR31584:SF1">
    <property type="entry name" value="TUMOR PROTEIN P53-INDUCIBLE PROTEIN 11"/>
    <property type="match status" value="1"/>
</dbReference>
<dbReference type="Pfam" id="PF14936">
    <property type="entry name" value="p53-inducible11"/>
    <property type="match status" value="1"/>
</dbReference>
<name>P5I11_MOUSE</name>
<organism>
    <name type="scientific">Mus musculus</name>
    <name type="common">Mouse</name>
    <dbReference type="NCBI Taxonomy" id="10090"/>
    <lineage>
        <taxon>Eukaryota</taxon>
        <taxon>Metazoa</taxon>
        <taxon>Chordata</taxon>
        <taxon>Craniata</taxon>
        <taxon>Vertebrata</taxon>
        <taxon>Euteleostomi</taxon>
        <taxon>Mammalia</taxon>
        <taxon>Eutheria</taxon>
        <taxon>Euarchontoglires</taxon>
        <taxon>Glires</taxon>
        <taxon>Rodentia</taxon>
        <taxon>Myomorpha</taxon>
        <taxon>Muroidea</taxon>
        <taxon>Muridae</taxon>
        <taxon>Murinae</taxon>
        <taxon>Mus</taxon>
        <taxon>Mus</taxon>
    </lineage>
</organism>
<protein>
    <recommendedName>
        <fullName>Tumor protein p53-inducible protein 11</fullName>
    </recommendedName>
    <alternativeName>
        <fullName>Transformation related protein 53 inducible protein 11</fullName>
    </alternativeName>
    <alternativeName>
        <fullName>p53-induced gene 11 protein</fullName>
    </alternativeName>
</protein>
<evidence type="ECO:0000255" key="1"/>
<evidence type="ECO:0000305" key="2"/>
<evidence type="ECO:0007744" key="3">
    <source>
    </source>
</evidence>
<sequence>MAGKQPPPLMKKHSQTDLVSRLKTRKILGVGGEDDDGEVHRSKISQVLGNEIKFAVREPLGLRVWQFLSAMLFSSVAIMALALPDQLYDAVFDGAEVTSKTPIRLYGGALLSISLIMWNALYTAEKVIIRWTLLTEACYFGVQSLVVTATLAETGLMSLGTVLLLASRLLFVIVSIYYYYQVGRKPKKV</sequence>
<proteinExistence type="evidence at protein level"/>
<feature type="chain" id="PRO_0000395041" description="Tumor protein p53-inducible protein 11">
    <location>
        <begin position="1"/>
        <end position="189"/>
    </location>
</feature>
<feature type="topological domain" description="Cytoplasmic" evidence="1">
    <location>
        <begin position="1"/>
        <end position="63"/>
    </location>
</feature>
<feature type="transmembrane region" description="Helical" evidence="1">
    <location>
        <begin position="64"/>
        <end position="84"/>
    </location>
</feature>
<feature type="topological domain" description="Extracellular" evidence="1">
    <location>
        <begin position="85"/>
        <end position="108"/>
    </location>
</feature>
<feature type="transmembrane region" description="Helical" evidence="1">
    <location>
        <begin position="109"/>
        <end position="129"/>
    </location>
</feature>
<feature type="topological domain" description="Cytoplasmic" evidence="1">
    <location>
        <position position="130"/>
    </location>
</feature>
<feature type="transmembrane region" description="Helical" evidence="1">
    <location>
        <begin position="131"/>
        <end position="151"/>
    </location>
</feature>
<feature type="topological domain" description="Extracellular" evidence="1">
    <location>
        <begin position="152"/>
        <end position="155"/>
    </location>
</feature>
<feature type="transmembrane region" description="Helical" evidence="1">
    <location>
        <begin position="156"/>
        <end position="176"/>
    </location>
</feature>
<feature type="topological domain" description="Cytoplasmic" evidence="1">
    <location>
        <begin position="177"/>
        <end position="189"/>
    </location>
</feature>
<feature type="modified residue" description="Phosphoserine" evidence="3">
    <location>
        <position position="14"/>
    </location>
</feature>
<gene>
    <name type="primary">Trp53i11</name>
    <name type="synonym">Pig11</name>
    <name type="synonym">Tp53i11</name>
</gene>
<keyword id="KW-0472">Membrane</keyword>
<keyword id="KW-0597">Phosphoprotein</keyword>
<keyword id="KW-1185">Reference proteome</keyword>
<keyword id="KW-0812">Transmembrane</keyword>
<keyword id="KW-1133">Transmembrane helix</keyword>
<comment type="subcellular location">
    <subcellularLocation>
        <location evidence="2">Membrane</location>
        <topology evidence="2">Multi-pass membrane protein</topology>
    </subcellularLocation>
</comment>
<comment type="sequence caution" evidence="2">
    <conflict type="frameshift">
        <sequence resource="EMBL-CDS" id="BAE25025"/>
    </conflict>
</comment>
<accession>Q4QQM4</accession>
<accession>Q3UQL4</accession>
<reference key="1">
    <citation type="journal article" date="2005" name="Science">
        <title>The transcriptional landscape of the mammalian genome.</title>
        <authorList>
            <person name="Carninci P."/>
            <person name="Kasukawa T."/>
            <person name="Katayama S."/>
            <person name="Gough J."/>
            <person name="Frith M.C."/>
            <person name="Maeda N."/>
            <person name="Oyama R."/>
            <person name="Ravasi T."/>
            <person name="Lenhard B."/>
            <person name="Wells C."/>
            <person name="Kodzius R."/>
            <person name="Shimokawa K."/>
            <person name="Bajic V.B."/>
            <person name="Brenner S.E."/>
            <person name="Batalov S."/>
            <person name="Forrest A.R."/>
            <person name="Zavolan M."/>
            <person name="Davis M.J."/>
            <person name="Wilming L.G."/>
            <person name="Aidinis V."/>
            <person name="Allen J.E."/>
            <person name="Ambesi-Impiombato A."/>
            <person name="Apweiler R."/>
            <person name="Aturaliya R.N."/>
            <person name="Bailey T.L."/>
            <person name="Bansal M."/>
            <person name="Baxter L."/>
            <person name="Beisel K.W."/>
            <person name="Bersano T."/>
            <person name="Bono H."/>
            <person name="Chalk A.M."/>
            <person name="Chiu K.P."/>
            <person name="Choudhary V."/>
            <person name="Christoffels A."/>
            <person name="Clutterbuck D.R."/>
            <person name="Crowe M.L."/>
            <person name="Dalla E."/>
            <person name="Dalrymple B.P."/>
            <person name="de Bono B."/>
            <person name="Della Gatta G."/>
            <person name="di Bernardo D."/>
            <person name="Down T."/>
            <person name="Engstrom P."/>
            <person name="Fagiolini M."/>
            <person name="Faulkner G."/>
            <person name="Fletcher C.F."/>
            <person name="Fukushima T."/>
            <person name="Furuno M."/>
            <person name="Futaki S."/>
            <person name="Gariboldi M."/>
            <person name="Georgii-Hemming P."/>
            <person name="Gingeras T.R."/>
            <person name="Gojobori T."/>
            <person name="Green R.E."/>
            <person name="Gustincich S."/>
            <person name="Harbers M."/>
            <person name="Hayashi Y."/>
            <person name="Hensch T.K."/>
            <person name="Hirokawa N."/>
            <person name="Hill D."/>
            <person name="Huminiecki L."/>
            <person name="Iacono M."/>
            <person name="Ikeo K."/>
            <person name="Iwama A."/>
            <person name="Ishikawa T."/>
            <person name="Jakt M."/>
            <person name="Kanapin A."/>
            <person name="Katoh M."/>
            <person name="Kawasawa Y."/>
            <person name="Kelso J."/>
            <person name="Kitamura H."/>
            <person name="Kitano H."/>
            <person name="Kollias G."/>
            <person name="Krishnan S.P."/>
            <person name="Kruger A."/>
            <person name="Kummerfeld S.K."/>
            <person name="Kurochkin I.V."/>
            <person name="Lareau L.F."/>
            <person name="Lazarevic D."/>
            <person name="Lipovich L."/>
            <person name="Liu J."/>
            <person name="Liuni S."/>
            <person name="McWilliam S."/>
            <person name="Madan Babu M."/>
            <person name="Madera M."/>
            <person name="Marchionni L."/>
            <person name="Matsuda H."/>
            <person name="Matsuzawa S."/>
            <person name="Miki H."/>
            <person name="Mignone F."/>
            <person name="Miyake S."/>
            <person name="Morris K."/>
            <person name="Mottagui-Tabar S."/>
            <person name="Mulder N."/>
            <person name="Nakano N."/>
            <person name="Nakauchi H."/>
            <person name="Ng P."/>
            <person name="Nilsson R."/>
            <person name="Nishiguchi S."/>
            <person name="Nishikawa S."/>
            <person name="Nori F."/>
            <person name="Ohara O."/>
            <person name="Okazaki Y."/>
            <person name="Orlando V."/>
            <person name="Pang K.C."/>
            <person name="Pavan W.J."/>
            <person name="Pavesi G."/>
            <person name="Pesole G."/>
            <person name="Petrovsky N."/>
            <person name="Piazza S."/>
            <person name="Reed J."/>
            <person name="Reid J.F."/>
            <person name="Ring B.Z."/>
            <person name="Ringwald M."/>
            <person name="Rost B."/>
            <person name="Ruan Y."/>
            <person name="Salzberg S.L."/>
            <person name="Sandelin A."/>
            <person name="Schneider C."/>
            <person name="Schoenbach C."/>
            <person name="Sekiguchi K."/>
            <person name="Semple C.A."/>
            <person name="Seno S."/>
            <person name="Sessa L."/>
            <person name="Sheng Y."/>
            <person name="Shibata Y."/>
            <person name="Shimada H."/>
            <person name="Shimada K."/>
            <person name="Silva D."/>
            <person name="Sinclair B."/>
            <person name="Sperling S."/>
            <person name="Stupka E."/>
            <person name="Sugiura K."/>
            <person name="Sultana R."/>
            <person name="Takenaka Y."/>
            <person name="Taki K."/>
            <person name="Tammoja K."/>
            <person name="Tan S.L."/>
            <person name="Tang S."/>
            <person name="Taylor M.S."/>
            <person name="Tegner J."/>
            <person name="Teichmann S.A."/>
            <person name="Ueda H.R."/>
            <person name="van Nimwegen E."/>
            <person name="Verardo R."/>
            <person name="Wei C.L."/>
            <person name="Yagi K."/>
            <person name="Yamanishi H."/>
            <person name="Zabarovsky E."/>
            <person name="Zhu S."/>
            <person name="Zimmer A."/>
            <person name="Hide W."/>
            <person name="Bult C."/>
            <person name="Grimmond S.M."/>
            <person name="Teasdale R.D."/>
            <person name="Liu E.T."/>
            <person name="Brusic V."/>
            <person name="Quackenbush J."/>
            <person name="Wahlestedt C."/>
            <person name="Mattick J.S."/>
            <person name="Hume D.A."/>
            <person name="Kai C."/>
            <person name="Sasaki D."/>
            <person name="Tomaru Y."/>
            <person name="Fukuda S."/>
            <person name="Kanamori-Katayama M."/>
            <person name="Suzuki M."/>
            <person name="Aoki J."/>
            <person name="Arakawa T."/>
            <person name="Iida J."/>
            <person name="Imamura K."/>
            <person name="Itoh M."/>
            <person name="Kato T."/>
            <person name="Kawaji H."/>
            <person name="Kawagashira N."/>
            <person name="Kawashima T."/>
            <person name="Kojima M."/>
            <person name="Kondo S."/>
            <person name="Konno H."/>
            <person name="Nakano K."/>
            <person name="Ninomiya N."/>
            <person name="Nishio T."/>
            <person name="Okada M."/>
            <person name="Plessy C."/>
            <person name="Shibata K."/>
            <person name="Shiraki T."/>
            <person name="Suzuki S."/>
            <person name="Tagami M."/>
            <person name="Waki K."/>
            <person name="Watahiki A."/>
            <person name="Okamura-Oho Y."/>
            <person name="Suzuki H."/>
            <person name="Kawai J."/>
            <person name="Hayashizaki Y."/>
        </authorList>
    </citation>
    <scope>NUCLEOTIDE SEQUENCE [LARGE SCALE MRNA]</scope>
    <source>
        <strain>C57BL/6J</strain>
        <tissue>Heart</tissue>
    </source>
</reference>
<reference key="2">
    <citation type="journal article" date="2009" name="PLoS Biol.">
        <title>Lineage-specific biology revealed by a finished genome assembly of the mouse.</title>
        <authorList>
            <person name="Church D.M."/>
            <person name="Goodstadt L."/>
            <person name="Hillier L.W."/>
            <person name="Zody M.C."/>
            <person name="Goldstein S."/>
            <person name="She X."/>
            <person name="Bult C.J."/>
            <person name="Agarwala R."/>
            <person name="Cherry J.L."/>
            <person name="DiCuccio M."/>
            <person name="Hlavina W."/>
            <person name="Kapustin Y."/>
            <person name="Meric P."/>
            <person name="Maglott D."/>
            <person name="Birtle Z."/>
            <person name="Marques A.C."/>
            <person name="Graves T."/>
            <person name="Zhou S."/>
            <person name="Teague B."/>
            <person name="Potamousis K."/>
            <person name="Churas C."/>
            <person name="Place M."/>
            <person name="Herschleb J."/>
            <person name="Runnheim R."/>
            <person name="Forrest D."/>
            <person name="Amos-Landgraf J."/>
            <person name="Schwartz D.C."/>
            <person name="Cheng Z."/>
            <person name="Lindblad-Toh K."/>
            <person name="Eichler E.E."/>
            <person name="Ponting C.P."/>
        </authorList>
    </citation>
    <scope>NUCLEOTIDE SEQUENCE [LARGE SCALE GENOMIC DNA]</scope>
    <source>
        <strain>C57BL/6J</strain>
    </source>
</reference>
<reference key="3">
    <citation type="submission" date="2005-07" db="EMBL/GenBank/DDBJ databases">
        <authorList>
            <person name="Mural R.J."/>
            <person name="Adams M.D."/>
            <person name="Myers E.W."/>
            <person name="Smith H.O."/>
            <person name="Venter J.C."/>
        </authorList>
    </citation>
    <scope>NUCLEOTIDE SEQUENCE [LARGE SCALE GENOMIC DNA]</scope>
</reference>
<reference key="4">
    <citation type="journal article" date="2004" name="Genome Res.">
        <title>The status, quality, and expansion of the NIH full-length cDNA project: the Mammalian Gene Collection (MGC).</title>
        <authorList>
            <consortium name="The MGC Project Team"/>
        </authorList>
    </citation>
    <scope>NUCLEOTIDE SEQUENCE [LARGE SCALE MRNA]</scope>
    <source>
        <strain>C57BL/6J</strain>
        <strain>FVB/N</strain>
        <tissue>Brain</tissue>
        <tissue>Colon</tissue>
    </source>
</reference>
<reference key="5">
    <citation type="journal article" date="2010" name="Cell">
        <title>A tissue-specific atlas of mouse protein phosphorylation and expression.</title>
        <authorList>
            <person name="Huttlin E.L."/>
            <person name="Jedrychowski M.P."/>
            <person name="Elias J.E."/>
            <person name="Goswami T."/>
            <person name="Rad R."/>
            <person name="Beausoleil S.A."/>
            <person name="Villen J."/>
            <person name="Haas W."/>
            <person name="Sowa M.E."/>
            <person name="Gygi S.P."/>
        </authorList>
    </citation>
    <scope>PHOSPHORYLATION [LARGE SCALE ANALYSIS] AT SER-14</scope>
    <scope>IDENTIFICATION BY MASS SPECTROMETRY [LARGE SCALE ANALYSIS]</scope>
    <source>
        <tissue>Brain</tissue>
        <tissue>Brown adipose tissue</tissue>
        <tissue>Heart</tissue>
        <tissue>Liver</tissue>
        <tissue>Lung</tissue>
        <tissue>Pancreas</tissue>
        <tissue>Spleen</tissue>
        <tissue>Testis</tissue>
    </source>
</reference>